<protein>
    <recommendedName>
        <fullName evidence="1">Putative phosphoenolpyruvate synthase regulatory protein</fullName>
        <shortName evidence="1">PEP synthase regulatory protein</shortName>
        <shortName evidence="1">PSRP</shortName>
        <ecNumber evidence="1">2.7.11.33</ecNumber>
        <ecNumber evidence="1">2.7.4.28</ecNumber>
    </recommendedName>
    <alternativeName>
        <fullName evidence="1">Pyruvate, water dikinase regulatory protein</fullName>
    </alternativeName>
</protein>
<evidence type="ECO:0000255" key="1">
    <source>
        <dbReference type="HAMAP-Rule" id="MF_01062"/>
    </source>
</evidence>
<dbReference type="EC" id="2.7.11.33" evidence="1"/>
<dbReference type="EC" id="2.7.4.28" evidence="1"/>
<dbReference type="EMBL" id="CU468230">
    <property type="protein sequence ID" value="CAP00918.1"/>
    <property type="molecule type" value="Genomic_DNA"/>
</dbReference>
<dbReference type="SMR" id="B0VM18"/>
<dbReference type="KEGG" id="abm:ABSDF1578"/>
<dbReference type="HOGENOM" id="CLU_046206_1_0_6"/>
<dbReference type="BioCyc" id="ABAU509170:GCL9-1281-MONOMER"/>
<dbReference type="Proteomes" id="UP000001741">
    <property type="component" value="Chromosome"/>
</dbReference>
<dbReference type="GO" id="GO:0043531">
    <property type="term" value="F:ADP binding"/>
    <property type="evidence" value="ECO:0007669"/>
    <property type="project" value="UniProtKB-UniRule"/>
</dbReference>
<dbReference type="GO" id="GO:0005524">
    <property type="term" value="F:ATP binding"/>
    <property type="evidence" value="ECO:0007669"/>
    <property type="project" value="InterPro"/>
</dbReference>
<dbReference type="GO" id="GO:0016776">
    <property type="term" value="F:phosphotransferase activity, phosphate group as acceptor"/>
    <property type="evidence" value="ECO:0007669"/>
    <property type="project" value="UniProtKB-UniRule"/>
</dbReference>
<dbReference type="GO" id="GO:0004674">
    <property type="term" value="F:protein serine/threonine kinase activity"/>
    <property type="evidence" value="ECO:0007669"/>
    <property type="project" value="UniProtKB-UniRule"/>
</dbReference>
<dbReference type="HAMAP" id="MF_01062">
    <property type="entry name" value="PSRP"/>
    <property type="match status" value="1"/>
</dbReference>
<dbReference type="InterPro" id="IPR005177">
    <property type="entry name" value="Kinase-pyrophosphorylase"/>
</dbReference>
<dbReference type="InterPro" id="IPR026530">
    <property type="entry name" value="PSRP"/>
</dbReference>
<dbReference type="NCBIfam" id="NF003742">
    <property type="entry name" value="PRK05339.1"/>
    <property type="match status" value="1"/>
</dbReference>
<dbReference type="PANTHER" id="PTHR31756">
    <property type="entry name" value="PYRUVATE, PHOSPHATE DIKINASE REGULATORY PROTEIN 1, CHLOROPLASTIC"/>
    <property type="match status" value="1"/>
</dbReference>
<dbReference type="PANTHER" id="PTHR31756:SF3">
    <property type="entry name" value="PYRUVATE, PHOSPHATE DIKINASE REGULATORY PROTEIN 1, CHLOROPLASTIC"/>
    <property type="match status" value="1"/>
</dbReference>
<dbReference type="Pfam" id="PF03618">
    <property type="entry name" value="Kinase-PPPase"/>
    <property type="match status" value="1"/>
</dbReference>
<gene>
    <name type="ordered locus">ABSDF1578</name>
</gene>
<proteinExistence type="inferred from homology"/>
<name>PSRP_ACIBS</name>
<reference key="1">
    <citation type="journal article" date="2008" name="PLoS ONE">
        <title>Comparative analysis of Acinetobacters: three genomes for three lifestyles.</title>
        <authorList>
            <person name="Vallenet D."/>
            <person name="Nordmann P."/>
            <person name="Barbe V."/>
            <person name="Poirel L."/>
            <person name="Mangenot S."/>
            <person name="Bataille E."/>
            <person name="Dossat C."/>
            <person name="Gas S."/>
            <person name="Kreimeyer A."/>
            <person name="Lenoble P."/>
            <person name="Oztas S."/>
            <person name="Poulain J."/>
            <person name="Segurens B."/>
            <person name="Robert C."/>
            <person name="Abergel C."/>
            <person name="Claverie J.-M."/>
            <person name="Raoult D."/>
            <person name="Medigue C."/>
            <person name="Weissenbach J."/>
            <person name="Cruveiller S."/>
        </authorList>
    </citation>
    <scope>NUCLEOTIDE SEQUENCE [LARGE SCALE GENOMIC DNA]</scope>
    <source>
        <strain>SDF</strain>
    </source>
</reference>
<organism>
    <name type="scientific">Acinetobacter baumannii (strain SDF)</name>
    <dbReference type="NCBI Taxonomy" id="509170"/>
    <lineage>
        <taxon>Bacteria</taxon>
        <taxon>Pseudomonadati</taxon>
        <taxon>Pseudomonadota</taxon>
        <taxon>Gammaproteobacteria</taxon>
        <taxon>Moraxellales</taxon>
        <taxon>Moraxellaceae</taxon>
        <taxon>Acinetobacter</taxon>
        <taxon>Acinetobacter calcoaceticus/baumannii complex</taxon>
    </lineage>
</organism>
<comment type="function">
    <text evidence="1">Bifunctional serine/threonine kinase and phosphorylase involved in the regulation of the phosphoenolpyruvate synthase (PEPS) by catalyzing its phosphorylation/dephosphorylation.</text>
</comment>
<comment type="catalytic activity">
    <reaction evidence="1">
        <text>[pyruvate, water dikinase] + ADP = [pyruvate, water dikinase]-phosphate + AMP + H(+)</text>
        <dbReference type="Rhea" id="RHEA:46020"/>
        <dbReference type="Rhea" id="RHEA-COMP:11425"/>
        <dbReference type="Rhea" id="RHEA-COMP:11426"/>
        <dbReference type="ChEBI" id="CHEBI:15378"/>
        <dbReference type="ChEBI" id="CHEBI:43176"/>
        <dbReference type="ChEBI" id="CHEBI:68546"/>
        <dbReference type="ChEBI" id="CHEBI:456215"/>
        <dbReference type="ChEBI" id="CHEBI:456216"/>
        <dbReference type="EC" id="2.7.11.33"/>
    </reaction>
</comment>
<comment type="catalytic activity">
    <reaction evidence="1">
        <text>[pyruvate, water dikinase]-phosphate + phosphate + H(+) = [pyruvate, water dikinase] + diphosphate</text>
        <dbReference type="Rhea" id="RHEA:48580"/>
        <dbReference type="Rhea" id="RHEA-COMP:11425"/>
        <dbReference type="Rhea" id="RHEA-COMP:11426"/>
        <dbReference type="ChEBI" id="CHEBI:15378"/>
        <dbReference type="ChEBI" id="CHEBI:33019"/>
        <dbReference type="ChEBI" id="CHEBI:43176"/>
        <dbReference type="ChEBI" id="CHEBI:43474"/>
        <dbReference type="ChEBI" id="CHEBI:68546"/>
        <dbReference type="EC" id="2.7.4.28"/>
    </reaction>
</comment>
<comment type="similarity">
    <text evidence="1">Belongs to the pyruvate, phosphate/water dikinase regulatory protein family. PSRP subfamily.</text>
</comment>
<accession>B0VM18</accession>
<sequence length="278" mass="31217">MSESKQFKRSVFFISDGTAITAETLGHSLLAQFPNVDFDIHIMPYITTEEAAMAVVVEINKCQTRDGCLPLVFDTLVDPHVREIINTAKAVNLDVFEGLISKLEQELGTPPTTLVGQTHAVTDSEYYKARIDAVHFALDNDDGARTRHYDKADLILIGVSRSGKTPTSIYLSLQFGIRVANYPLTEEDLDDNRLPAVLREHRSKLFGLMIDAERLVAIRSERKANSRYASFSQCQMELRAIEGIYISEGIKYLNVTEMSIEEISTRILQMTGLKRRIG</sequence>
<keyword id="KW-0418">Kinase</keyword>
<keyword id="KW-0547">Nucleotide-binding</keyword>
<keyword id="KW-0723">Serine/threonine-protein kinase</keyword>
<keyword id="KW-0808">Transferase</keyword>
<feature type="chain" id="PRO_1000136448" description="Putative phosphoenolpyruvate synthase regulatory protein">
    <location>
        <begin position="1"/>
        <end position="278"/>
    </location>
</feature>
<feature type="binding site" evidence="1">
    <location>
        <begin position="158"/>
        <end position="165"/>
    </location>
    <ligand>
        <name>ADP</name>
        <dbReference type="ChEBI" id="CHEBI:456216"/>
    </ligand>
</feature>